<proteinExistence type="evidence at protein level"/>
<evidence type="ECO:0000250" key="1"/>
<evidence type="ECO:0000256" key="2">
    <source>
        <dbReference type="SAM" id="MobiDB-lite"/>
    </source>
</evidence>
<evidence type="ECO:0000269" key="3">
    <source>
    </source>
</evidence>
<evidence type="ECO:0000305" key="4"/>
<keyword id="KW-0903">Direct protein sequencing</keyword>
<keyword id="KW-1015">Disulfide bond</keyword>
<keyword id="KW-0255">Endonuclease</keyword>
<keyword id="KW-0325">Glycoprotein</keyword>
<keyword id="KW-0378">Hydrolase</keyword>
<keyword id="KW-0456">Lyase</keyword>
<keyword id="KW-0540">Nuclease</keyword>
<keyword id="KW-0964">Secreted</keyword>
<sequence length="124" mass="13886">KESSAMKFQRQHMDSSGSPSTNANYCNEMMKGRNMTQGYCKPVNTFVHEPLADVQAVCFQKNVPCKNGQSNCYQSNSNMHITDCRLTSNSKYPNCSYRTSRENKGIIVACEGNPYVPVHFDASV</sequence>
<gene>
    <name type="primary">RNASE1</name>
    <name type="synonym">RNS1</name>
</gene>
<reference key="1">
    <citation type="journal article" date="1976" name="Biochim. Biophys. Acta">
        <title>Isolation, properties and primary structure of coypu and chinchilla pancreatic ribonuclease.</title>
        <authorList>
            <person name="van den Berg A."/>
            <person name="van den Hende-Timmer L."/>
            <person name="Beintema J.J."/>
        </authorList>
    </citation>
    <scope>PROTEIN SEQUENCE</scope>
    <scope>GLYCOSYLATION AT ASN-34</scope>
    <source>
        <tissue>Pancreas</tissue>
    </source>
</reference>
<protein>
    <recommendedName>
        <fullName>Ribonuclease pancreatic</fullName>
        <ecNumber>4.6.1.18</ecNumber>
    </recommendedName>
    <alternativeName>
        <fullName>RNase 1</fullName>
    </alternativeName>
    <alternativeName>
        <fullName>RNase A</fullName>
    </alternativeName>
</protein>
<organism>
    <name type="scientific">Chinchilla chinchilla</name>
    <name type="common">Short-tailed chinchilla</name>
    <name type="synonym">Chinchilla brevicaudata</name>
    <dbReference type="NCBI Taxonomy" id="10152"/>
    <lineage>
        <taxon>Eukaryota</taxon>
        <taxon>Metazoa</taxon>
        <taxon>Chordata</taxon>
        <taxon>Craniata</taxon>
        <taxon>Vertebrata</taxon>
        <taxon>Euteleostomi</taxon>
        <taxon>Mammalia</taxon>
        <taxon>Eutheria</taxon>
        <taxon>Euarchontoglires</taxon>
        <taxon>Glires</taxon>
        <taxon>Rodentia</taxon>
        <taxon>Hystricomorpha</taxon>
        <taxon>Chinchillidae</taxon>
        <taxon>Chinchilla</taxon>
    </lineage>
</organism>
<dbReference type="EC" id="4.6.1.18"/>
<dbReference type="PIR" id="A00820">
    <property type="entry name" value="NRCB"/>
</dbReference>
<dbReference type="SMR" id="P00675"/>
<dbReference type="GlyCosmos" id="P00675">
    <property type="glycosylation" value="1 site, No reported glycans"/>
</dbReference>
<dbReference type="iPTMnet" id="P00675"/>
<dbReference type="GO" id="GO:0005576">
    <property type="term" value="C:extracellular region"/>
    <property type="evidence" value="ECO:0007669"/>
    <property type="project" value="UniProtKB-SubCell"/>
</dbReference>
<dbReference type="GO" id="GO:0016829">
    <property type="term" value="F:lyase activity"/>
    <property type="evidence" value="ECO:0007669"/>
    <property type="project" value="UniProtKB-KW"/>
</dbReference>
<dbReference type="GO" id="GO:0003676">
    <property type="term" value="F:nucleic acid binding"/>
    <property type="evidence" value="ECO:0007669"/>
    <property type="project" value="InterPro"/>
</dbReference>
<dbReference type="GO" id="GO:0004522">
    <property type="term" value="F:ribonuclease A activity"/>
    <property type="evidence" value="ECO:0007669"/>
    <property type="project" value="UniProtKB-EC"/>
</dbReference>
<dbReference type="GO" id="GO:0050830">
    <property type="term" value="P:defense response to Gram-positive bacterium"/>
    <property type="evidence" value="ECO:0007669"/>
    <property type="project" value="TreeGrafter"/>
</dbReference>
<dbReference type="CDD" id="cd06265">
    <property type="entry name" value="RNase_A_canonical"/>
    <property type="match status" value="1"/>
</dbReference>
<dbReference type="FunFam" id="3.10.130.10:FF:000001">
    <property type="entry name" value="Ribonuclease pancreatic"/>
    <property type="match status" value="1"/>
</dbReference>
<dbReference type="Gene3D" id="3.10.130.10">
    <property type="entry name" value="Ribonuclease A-like domain"/>
    <property type="match status" value="1"/>
</dbReference>
<dbReference type="InterPro" id="IPR001427">
    <property type="entry name" value="RNaseA"/>
</dbReference>
<dbReference type="InterPro" id="IPR036816">
    <property type="entry name" value="RNaseA-like_dom_sf"/>
</dbReference>
<dbReference type="InterPro" id="IPR023411">
    <property type="entry name" value="RNaseA_AS"/>
</dbReference>
<dbReference type="InterPro" id="IPR023412">
    <property type="entry name" value="RNaseA_domain"/>
</dbReference>
<dbReference type="PANTHER" id="PTHR11437">
    <property type="entry name" value="RIBONUCLEASE"/>
    <property type="match status" value="1"/>
</dbReference>
<dbReference type="PANTHER" id="PTHR11437:SF24">
    <property type="entry name" value="RIBONUCLEASE PANCREATIC"/>
    <property type="match status" value="1"/>
</dbReference>
<dbReference type="Pfam" id="PF00074">
    <property type="entry name" value="RnaseA"/>
    <property type="match status" value="1"/>
</dbReference>
<dbReference type="PRINTS" id="PR00794">
    <property type="entry name" value="RIBONUCLEASE"/>
</dbReference>
<dbReference type="SMART" id="SM00092">
    <property type="entry name" value="RNAse_Pc"/>
    <property type="match status" value="1"/>
</dbReference>
<dbReference type="SUPFAM" id="SSF54076">
    <property type="entry name" value="RNase A-like"/>
    <property type="match status" value="1"/>
</dbReference>
<dbReference type="PROSITE" id="PS00127">
    <property type="entry name" value="RNASE_PANCREATIC"/>
    <property type="match status" value="1"/>
</dbReference>
<accession>P00675</accession>
<name>RNAS1_CHICH</name>
<comment type="function">
    <text evidence="1">Endonuclease that catalyzes the cleavage of RNA on the 3' side of pyrimidine nucleotides. Acts on single-stranded and double-stranded RNA (By similarity).</text>
</comment>
<comment type="catalytic activity">
    <reaction>
        <text>an [RNA] containing cytidine + H2O = an [RNA]-3'-cytidine-3'-phosphate + a 5'-hydroxy-ribonucleotide-3'-[RNA].</text>
        <dbReference type="EC" id="4.6.1.18"/>
    </reaction>
</comment>
<comment type="catalytic activity">
    <reaction>
        <text>an [RNA] containing uridine + H2O = an [RNA]-3'-uridine-3'-phosphate + a 5'-hydroxy-ribonucleotide-3'-[RNA].</text>
        <dbReference type="EC" id="4.6.1.18"/>
    </reaction>
</comment>
<comment type="subunit">
    <text evidence="1">Monomer. Interacts with and forms tight 1:1 complexes with RNH1. Dimerization of two such complexes may occur. Interaction with RNH1 inhibits this protein (By similarity).</text>
</comment>
<comment type="subcellular location">
    <subcellularLocation>
        <location>Secreted</location>
    </subcellularLocation>
</comment>
<comment type="tissue specificity">
    <text>Pancreas.</text>
</comment>
<comment type="similarity">
    <text evidence="4">Belongs to the pancreatic ribonuclease family.</text>
</comment>
<feature type="chain" id="PRO_0000057191" description="Ribonuclease pancreatic">
    <location>
        <begin position="1"/>
        <end position="124"/>
    </location>
</feature>
<feature type="region of interest" description="Disordered" evidence="2">
    <location>
        <begin position="1"/>
        <end position="24"/>
    </location>
</feature>
<feature type="compositionally biased region" description="Polar residues" evidence="2">
    <location>
        <begin position="14"/>
        <end position="24"/>
    </location>
</feature>
<feature type="active site" description="Proton acceptor" evidence="1">
    <location>
        <position position="12"/>
    </location>
</feature>
<feature type="active site" description="Proton donor" evidence="1">
    <location>
        <position position="119"/>
    </location>
</feature>
<feature type="binding site" evidence="1">
    <location>
        <position position="7"/>
    </location>
    <ligand>
        <name>substrate</name>
    </ligand>
</feature>
<feature type="binding site" evidence="1">
    <location>
        <position position="10"/>
    </location>
    <ligand>
        <name>substrate</name>
    </ligand>
</feature>
<feature type="binding site" evidence="1">
    <location>
        <begin position="41"/>
        <end position="45"/>
    </location>
    <ligand>
        <name>substrate</name>
    </ligand>
</feature>
<feature type="binding site" evidence="1">
    <location>
        <position position="66"/>
    </location>
    <ligand>
        <name>substrate</name>
    </ligand>
</feature>
<feature type="binding site" evidence="1">
    <location>
        <position position="85"/>
    </location>
    <ligand>
        <name>substrate</name>
    </ligand>
</feature>
<feature type="glycosylation site" description="N-linked (GlcNAc...) asparagine" evidence="3">
    <location>
        <position position="34"/>
    </location>
</feature>
<feature type="disulfide bond" evidence="1">
    <location>
        <begin position="26"/>
        <end position="84"/>
    </location>
</feature>
<feature type="disulfide bond" evidence="1">
    <location>
        <begin position="40"/>
        <end position="95"/>
    </location>
</feature>
<feature type="disulfide bond" evidence="1">
    <location>
        <begin position="58"/>
        <end position="110"/>
    </location>
</feature>
<feature type="disulfide bond" evidence="1">
    <location>
        <begin position="65"/>
        <end position="72"/>
    </location>
</feature>
<feature type="sequence variant">
    <original>G</original>
    <variation>D</variation>
    <location>
        <position position="32"/>
    </location>
</feature>